<comment type="similarity">
    <text evidence="1">Belongs to the universal ribosomal protein uL29 family.</text>
</comment>
<accession>P66167</accession>
<accession>Q927L5</accession>
<protein>
    <recommendedName>
        <fullName evidence="1">Large ribosomal subunit protein uL29</fullName>
    </recommendedName>
    <alternativeName>
        <fullName evidence="2">50S ribosomal protein L29</fullName>
    </alternativeName>
</protein>
<proteinExistence type="inferred from homology"/>
<dbReference type="EMBL" id="AL596173">
    <property type="protein sequence ID" value="CAC97999.1"/>
    <property type="molecule type" value="Genomic_DNA"/>
</dbReference>
<dbReference type="PIR" id="AG1778">
    <property type="entry name" value="AG1778"/>
</dbReference>
<dbReference type="RefSeq" id="WP_003720942.1">
    <property type="nucleotide sequence ID" value="NC_003212.1"/>
</dbReference>
<dbReference type="SMR" id="P66167"/>
<dbReference type="STRING" id="272626.gene:17567160"/>
<dbReference type="GeneID" id="93240505"/>
<dbReference type="KEGG" id="lin:rpmC"/>
<dbReference type="eggNOG" id="COG0255">
    <property type="taxonomic scope" value="Bacteria"/>
</dbReference>
<dbReference type="HOGENOM" id="CLU_158491_5_2_9"/>
<dbReference type="OrthoDB" id="9815192at2"/>
<dbReference type="Proteomes" id="UP000002513">
    <property type="component" value="Chromosome"/>
</dbReference>
<dbReference type="GO" id="GO:0022625">
    <property type="term" value="C:cytosolic large ribosomal subunit"/>
    <property type="evidence" value="ECO:0007669"/>
    <property type="project" value="TreeGrafter"/>
</dbReference>
<dbReference type="GO" id="GO:0003735">
    <property type="term" value="F:structural constituent of ribosome"/>
    <property type="evidence" value="ECO:0007669"/>
    <property type="project" value="InterPro"/>
</dbReference>
<dbReference type="GO" id="GO:0006412">
    <property type="term" value="P:translation"/>
    <property type="evidence" value="ECO:0007669"/>
    <property type="project" value="UniProtKB-UniRule"/>
</dbReference>
<dbReference type="CDD" id="cd00427">
    <property type="entry name" value="Ribosomal_L29_HIP"/>
    <property type="match status" value="1"/>
</dbReference>
<dbReference type="FunFam" id="1.10.287.310:FF:000001">
    <property type="entry name" value="50S ribosomal protein L29"/>
    <property type="match status" value="1"/>
</dbReference>
<dbReference type="Gene3D" id="1.10.287.310">
    <property type="match status" value="1"/>
</dbReference>
<dbReference type="HAMAP" id="MF_00374">
    <property type="entry name" value="Ribosomal_uL29"/>
    <property type="match status" value="1"/>
</dbReference>
<dbReference type="InterPro" id="IPR050063">
    <property type="entry name" value="Ribosomal_protein_uL29"/>
</dbReference>
<dbReference type="InterPro" id="IPR001854">
    <property type="entry name" value="Ribosomal_uL29"/>
</dbReference>
<dbReference type="InterPro" id="IPR018254">
    <property type="entry name" value="Ribosomal_uL29_CS"/>
</dbReference>
<dbReference type="InterPro" id="IPR036049">
    <property type="entry name" value="Ribosomal_uL29_sf"/>
</dbReference>
<dbReference type="NCBIfam" id="TIGR00012">
    <property type="entry name" value="L29"/>
    <property type="match status" value="1"/>
</dbReference>
<dbReference type="PANTHER" id="PTHR10916">
    <property type="entry name" value="60S RIBOSOMAL PROTEIN L35/50S RIBOSOMAL PROTEIN L29"/>
    <property type="match status" value="1"/>
</dbReference>
<dbReference type="PANTHER" id="PTHR10916:SF0">
    <property type="entry name" value="LARGE RIBOSOMAL SUBUNIT PROTEIN UL29C"/>
    <property type="match status" value="1"/>
</dbReference>
<dbReference type="Pfam" id="PF00831">
    <property type="entry name" value="Ribosomal_L29"/>
    <property type="match status" value="1"/>
</dbReference>
<dbReference type="SUPFAM" id="SSF46561">
    <property type="entry name" value="Ribosomal protein L29 (L29p)"/>
    <property type="match status" value="1"/>
</dbReference>
<dbReference type="PROSITE" id="PS00579">
    <property type="entry name" value="RIBOSOMAL_L29"/>
    <property type="match status" value="1"/>
</dbReference>
<gene>
    <name evidence="1" type="primary">rpmC</name>
    <name type="ordered locus">lin2773</name>
</gene>
<keyword id="KW-0687">Ribonucleoprotein</keyword>
<keyword id="KW-0689">Ribosomal protein</keyword>
<evidence type="ECO:0000255" key="1">
    <source>
        <dbReference type="HAMAP-Rule" id="MF_00374"/>
    </source>
</evidence>
<evidence type="ECO:0000305" key="2"/>
<organism>
    <name type="scientific">Listeria innocua serovar 6a (strain ATCC BAA-680 / CLIP 11262)</name>
    <dbReference type="NCBI Taxonomy" id="272626"/>
    <lineage>
        <taxon>Bacteria</taxon>
        <taxon>Bacillati</taxon>
        <taxon>Bacillota</taxon>
        <taxon>Bacilli</taxon>
        <taxon>Bacillales</taxon>
        <taxon>Listeriaceae</taxon>
        <taxon>Listeria</taxon>
    </lineage>
</organism>
<sequence length="63" mass="7402">MKANDIRDLSTTEIQDQEKALKEELFNLRFQLATGQLENTARIREVRKAIARMKTIVRERELA</sequence>
<reference key="1">
    <citation type="journal article" date="2001" name="Science">
        <title>Comparative genomics of Listeria species.</title>
        <authorList>
            <person name="Glaser P."/>
            <person name="Frangeul L."/>
            <person name="Buchrieser C."/>
            <person name="Rusniok C."/>
            <person name="Amend A."/>
            <person name="Baquero F."/>
            <person name="Berche P."/>
            <person name="Bloecker H."/>
            <person name="Brandt P."/>
            <person name="Chakraborty T."/>
            <person name="Charbit A."/>
            <person name="Chetouani F."/>
            <person name="Couve E."/>
            <person name="de Daruvar A."/>
            <person name="Dehoux P."/>
            <person name="Domann E."/>
            <person name="Dominguez-Bernal G."/>
            <person name="Duchaud E."/>
            <person name="Durant L."/>
            <person name="Dussurget O."/>
            <person name="Entian K.-D."/>
            <person name="Fsihi H."/>
            <person name="Garcia-del Portillo F."/>
            <person name="Garrido P."/>
            <person name="Gautier L."/>
            <person name="Goebel W."/>
            <person name="Gomez-Lopez N."/>
            <person name="Hain T."/>
            <person name="Hauf J."/>
            <person name="Jackson D."/>
            <person name="Jones L.-M."/>
            <person name="Kaerst U."/>
            <person name="Kreft J."/>
            <person name="Kuhn M."/>
            <person name="Kunst F."/>
            <person name="Kurapkat G."/>
            <person name="Madueno E."/>
            <person name="Maitournam A."/>
            <person name="Mata Vicente J."/>
            <person name="Ng E."/>
            <person name="Nedjari H."/>
            <person name="Nordsiek G."/>
            <person name="Novella S."/>
            <person name="de Pablos B."/>
            <person name="Perez-Diaz J.-C."/>
            <person name="Purcell R."/>
            <person name="Remmel B."/>
            <person name="Rose M."/>
            <person name="Schlueter T."/>
            <person name="Simoes N."/>
            <person name="Tierrez A."/>
            <person name="Vazquez-Boland J.-A."/>
            <person name="Voss H."/>
            <person name="Wehland J."/>
            <person name="Cossart P."/>
        </authorList>
    </citation>
    <scope>NUCLEOTIDE SEQUENCE [LARGE SCALE GENOMIC DNA]</scope>
    <source>
        <strain>ATCC BAA-680 / CLIP 11262</strain>
    </source>
</reference>
<feature type="chain" id="PRO_0000130412" description="Large ribosomal subunit protein uL29">
    <location>
        <begin position="1"/>
        <end position="63"/>
    </location>
</feature>
<name>RL29_LISIN</name>